<protein>
    <recommendedName>
        <fullName evidence="1">Fructose-1,6-bisphosphatase class 1 1</fullName>
        <shortName evidence="1">FBPase class 1 1</shortName>
        <ecNumber evidence="1">3.1.3.11</ecNumber>
    </recommendedName>
    <alternativeName>
        <fullName evidence="1">D-fructose-1,6-bisphosphate 1-phosphohydrolase class 1 1</fullName>
    </alternativeName>
</protein>
<dbReference type="EC" id="3.1.3.11" evidence="1"/>
<dbReference type="EMBL" id="CP000555">
    <property type="protein sequence ID" value="ABM94443.1"/>
    <property type="molecule type" value="Genomic_DNA"/>
</dbReference>
<dbReference type="RefSeq" id="WP_011829080.1">
    <property type="nucleotide sequence ID" value="NC_008825.1"/>
</dbReference>
<dbReference type="SMR" id="A2SFV4"/>
<dbReference type="STRING" id="420662.Mpe_A1481"/>
<dbReference type="KEGG" id="mpt:Mpe_A1481"/>
<dbReference type="eggNOG" id="COG0158">
    <property type="taxonomic scope" value="Bacteria"/>
</dbReference>
<dbReference type="HOGENOM" id="CLU_039977_0_0_4"/>
<dbReference type="UniPathway" id="UPA00116"/>
<dbReference type="Proteomes" id="UP000000366">
    <property type="component" value="Chromosome"/>
</dbReference>
<dbReference type="GO" id="GO:0005829">
    <property type="term" value="C:cytosol"/>
    <property type="evidence" value="ECO:0007669"/>
    <property type="project" value="TreeGrafter"/>
</dbReference>
<dbReference type="GO" id="GO:0042132">
    <property type="term" value="F:fructose 1,6-bisphosphate 1-phosphatase activity"/>
    <property type="evidence" value="ECO:0007669"/>
    <property type="project" value="UniProtKB-UniRule"/>
</dbReference>
<dbReference type="GO" id="GO:0000287">
    <property type="term" value="F:magnesium ion binding"/>
    <property type="evidence" value="ECO:0007669"/>
    <property type="project" value="UniProtKB-UniRule"/>
</dbReference>
<dbReference type="GO" id="GO:0030388">
    <property type="term" value="P:fructose 1,6-bisphosphate metabolic process"/>
    <property type="evidence" value="ECO:0007669"/>
    <property type="project" value="TreeGrafter"/>
</dbReference>
<dbReference type="GO" id="GO:0006002">
    <property type="term" value="P:fructose 6-phosphate metabolic process"/>
    <property type="evidence" value="ECO:0007669"/>
    <property type="project" value="TreeGrafter"/>
</dbReference>
<dbReference type="GO" id="GO:0006000">
    <property type="term" value="P:fructose metabolic process"/>
    <property type="evidence" value="ECO:0007669"/>
    <property type="project" value="TreeGrafter"/>
</dbReference>
<dbReference type="GO" id="GO:0006094">
    <property type="term" value="P:gluconeogenesis"/>
    <property type="evidence" value="ECO:0007669"/>
    <property type="project" value="UniProtKB-UniRule"/>
</dbReference>
<dbReference type="GO" id="GO:0019253">
    <property type="term" value="P:reductive pentose-phosphate cycle"/>
    <property type="evidence" value="ECO:0007669"/>
    <property type="project" value="UniProtKB-UniRule"/>
</dbReference>
<dbReference type="GO" id="GO:0005986">
    <property type="term" value="P:sucrose biosynthetic process"/>
    <property type="evidence" value="ECO:0007669"/>
    <property type="project" value="TreeGrafter"/>
</dbReference>
<dbReference type="CDD" id="cd00354">
    <property type="entry name" value="FBPase"/>
    <property type="match status" value="1"/>
</dbReference>
<dbReference type="FunFam" id="3.40.190.80:FF:000011">
    <property type="entry name" value="Fructose-1,6-bisphosphatase class 1"/>
    <property type="match status" value="1"/>
</dbReference>
<dbReference type="Gene3D" id="3.40.190.80">
    <property type="match status" value="1"/>
</dbReference>
<dbReference type="Gene3D" id="3.30.540.10">
    <property type="entry name" value="Fructose-1,6-Bisphosphatase, subunit A, domain 1"/>
    <property type="match status" value="1"/>
</dbReference>
<dbReference type="HAMAP" id="MF_01855">
    <property type="entry name" value="FBPase_class1"/>
    <property type="match status" value="1"/>
</dbReference>
<dbReference type="InterPro" id="IPR044015">
    <property type="entry name" value="FBPase_C_dom"/>
</dbReference>
<dbReference type="InterPro" id="IPR000146">
    <property type="entry name" value="FBPase_class-1"/>
</dbReference>
<dbReference type="InterPro" id="IPR033391">
    <property type="entry name" value="FBPase_N"/>
</dbReference>
<dbReference type="InterPro" id="IPR028343">
    <property type="entry name" value="FBPtase"/>
</dbReference>
<dbReference type="InterPro" id="IPR020548">
    <property type="entry name" value="Fructose_bisphosphatase_AS"/>
</dbReference>
<dbReference type="NCBIfam" id="NF006779">
    <property type="entry name" value="PRK09293.1-3"/>
    <property type="match status" value="1"/>
</dbReference>
<dbReference type="NCBIfam" id="NF006780">
    <property type="entry name" value="PRK09293.1-4"/>
    <property type="match status" value="1"/>
</dbReference>
<dbReference type="PANTHER" id="PTHR11556">
    <property type="entry name" value="FRUCTOSE-1,6-BISPHOSPHATASE-RELATED"/>
    <property type="match status" value="1"/>
</dbReference>
<dbReference type="PANTHER" id="PTHR11556:SF35">
    <property type="entry name" value="SEDOHEPTULOSE-1,7-BISPHOSPHATASE, CHLOROPLASTIC"/>
    <property type="match status" value="1"/>
</dbReference>
<dbReference type="Pfam" id="PF00316">
    <property type="entry name" value="FBPase"/>
    <property type="match status" value="1"/>
</dbReference>
<dbReference type="Pfam" id="PF18913">
    <property type="entry name" value="FBPase_C"/>
    <property type="match status" value="1"/>
</dbReference>
<dbReference type="PIRSF" id="PIRSF500210">
    <property type="entry name" value="FBPtase"/>
    <property type="match status" value="1"/>
</dbReference>
<dbReference type="PIRSF" id="PIRSF000904">
    <property type="entry name" value="FBPtase_SBPase"/>
    <property type="match status" value="1"/>
</dbReference>
<dbReference type="PRINTS" id="PR00115">
    <property type="entry name" value="F16BPHPHTASE"/>
</dbReference>
<dbReference type="SUPFAM" id="SSF56655">
    <property type="entry name" value="Carbohydrate phosphatase"/>
    <property type="match status" value="1"/>
</dbReference>
<dbReference type="PROSITE" id="PS00124">
    <property type="entry name" value="FBPASE"/>
    <property type="match status" value="1"/>
</dbReference>
<feature type="chain" id="PRO_0000364596" description="Fructose-1,6-bisphosphatase class 1 1">
    <location>
        <begin position="1"/>
        <end position="351"/>
    </location>
</feature>
<feature type="binding site" evidence="1">
    <location>
        <position position="84"/>
    </location>
    <ligand>
        <name>Mg(2+)</name>
        <dbReference type="ChEBI" id="CHEBI:18420"/>
        <label>1</label>
    </ligand>
</feature>
<feature type="binding site" evidence="1">
    <location>
        <position position="106"/>
    </location>
    <ligand>
        <name>Mg(2+)</name>
        <dbReference type="ChEBI" id="CHEBI:18420"/>
        <label>1</label>
    </ligand>
</feature>
<feature type="binding site" evidence="1">
    <location>
        <position position="106"/>
    </location>
    <ligand>
        <name>Mg(2+)</name>
        <dbReference type="ChEBI" id="CHEBI:18420"/>
        <label>2</label>
    </ligand>
</feature>
<feature type="binding site" evidence="1">
    <location>
        <position position="108"/>
    </location>
    <ligand>
        <name>Mg(2+)</name>
        <dbReference type="ChEBI" id="CHEBI:18420"/>
        <label>1</label>
    </ligand>
</feature>
<feature type="binding site" evidence="1">
    <location>
        <begin position="109"/>
        <end position="112"/>
    </location>
    <ligand>
        <name>substrate</name>
    </ligand>
</feature>
<feature type="binding site" evidence="1">
    <location>
        <position position="109"/>
    </location>
    <ligand>
        <name>Mg(2+)</name>
        <dbReference type="ChEBI" id="CHEBI:18420"/>
        <label>2</label>
    </ligand>
</feature>
<feature type="binding site" evidence="1">
    <location>
        <position position="205"/>
    </location>
    <ligand>
        <name>substrate</name>
    </ligand>
</feature>
<feature type="binding site" evidence="1">
    <location>
        <position position="277"/>
    </location>
    <ligand>
        <name>Mg(2+)</name>
        <dbReference type="ChEBI" id="CHEBI:18420"/>
        <label>2</label>
    </ligand>
</feature>
<proteinExistence type="inferred from homology"/>
<gene>
    <name evidence="1" type="primary">fbp1</name>
    <name type="ordered locus">Mpe_A1481</name>
</gene>
<accession>A2SFV4</accession>
<organism>
    <name type="scientific">Methylibium petroleiphilum (strain ATCC BAA-1232 / LMG 22953 / PM1)</name>
    <dbReference type="NCBI Taxonomy" id="420662"/>
    <lineage>
        <taxon>Bacteria</taxon>
        <taxon>Pseudomonadati</taxon>
        <taxon>Pseudomonadota</taxon>
        <taxon>Betaproteobacteria</taxon>
        <taxon>Burkholderiales</taxon>
        <taxon>Sphaerotilaceae</taxon>
        <taxon>Methylibium</taxon>
    </lineage>
</organism>
<name>F16A1_METPP</name>
<sequence>MDPIELEQWLSAHPPALADVIRHVAAACARISRAAARAPLAGQLGGAGSLNSQGEPQQRLDVLADACVSQALSACTHVAGWVSEEHADVTVSPEHGSGGAYLVVFDPLDGSSNVETNVAIGSIFSVLPHLFRGTPASAAAFMQPGRRQVAAGYAIYGPSTVLVLSLGQGVHMFTLDPDAPGDAARWVLTRADVEVPVSTTEFAINASNQRFWEKPVQRYVAECLAGQSGPRGRDFNMRWVASLVAEVHRILTRGGVFLYPRDSREPFRPGRLRLLYEAAPMAWLMEQAGAAATTGTGPLLELVPDALHHKVPVILGSRDEVERIVTYHEDPSANVSWQLFKTRSLFIQPQA</sequence>
<evidence type="ECO:0000255" key="1">
    <source>
        <dbReference type="HAMAP-Rule" id="MF_01855"/>
    </source>
</evidence>
<reference key="1">
    <citation type="journal article" date="2007" name="J. Bacteriol.">
        <title>Whole-genome analysis of the methyl tert-butyl ether-degrading beta-proteobacterium Methylibium petroleiphilum PM1.</title>
        <authorList>
            <person name="Kane S.R."/>
            <person name="Chakicherla A.Y."/>
            <person name="Chain P.S.G."/>
            <person name="Schmidt R."/>
            <person name="Shin M.W."/>
            <person name="Legler T.C."/>
            <person name="Scow K.M."/>
            <person name="Larimer F.W."/>
            <person name="Lucas S.M."/>
            <person name="Richardson P.M."/>
            <person name="Hristova K.R."/>
        </authorList>
    </citation>
    <scope>NUCLEOTIDE SEQUENCE [LARGE SCALE GENOMIC DNA]</scope>
    <source>
        <strain>ATCC BAA-1232 / LMG 22953 / PM1</strain>
    </source>
</reference>
<keyword id="KW-0113">Calvin cycle</keyword>
<keyword id="KW-0119">Carbohydrate metabolism</keyword>
<keyword id="KW-0963">Cytoplasm</keyword>
<keyword id="KW-0378">Hydrolase</keyword>
<keyword id="KW-0460">Magnesium</keyword>
<keyword id="KW-0479">Metal-binding</keyword>
<keyword id="KW-1185">Reference proteome</keyword>
<comment type="catalytic activity">
    <reaction evidence="1">
        <text>beta-D-fructose 1,6-bisphosphate + H2O = beta-D-fructose 6-phosphate + phosphate</text>
        <dbReference type="Rhea" id="RHEA:11064"/>
        <dbReference type="ChEBI" id="CHEBI:15377"/>
        <dbReference type="ChEBI" id="CHEBI:32966"/>
        <dbReference type="ChEBI" id="CHEBI:43474"/>
        <dbReference type="ChEBI" id="CHEBI:57634"/>
        <dbReference type="EC" id="3.1.3.11"/>
    </reaction>
</comment>
<comment type="cofactor">
    <cofactor evidence="1">
        <name>Mg(2+)</name>
        <dbReference type="ChEBI" id="CHEBI:18420"/>
    </cofactor>
    <text evidence="1">Binds 2 magnesium ions per subunit.</text>
</comment>
<comment type="pathway">
    <text evidence="1">Carbohydrate biosynthesis; Calvin cycle.</text>
</comment>
<comment type="subunit">
    <text evidence="1">Homotetramer.</text>
</comment>
<comment type="subcellular location">
    <subcellularLocation>
        <location evidence="1">Cytoplasm</location>
    </subcellularLocation>
</comment>
<comment type="similarity">
    <text evidence="1">Belongs to the FBPase class 1 family.</text>
</comment>